<accession>Q1I0U2</accession>
<feature type="chain" id="PRO_0000404161" description="Uncharacterized protein VP10">
    <location>
        <begin position="1"/>
        <end position="236"/>
    </location>
</feature>
<organismHost>
    <name type="scientific">Micromonas pusilla</name>
    <name type="common">Picoplanktonic green alga</name>
    <name type="synonym">Chromulina pusilla</name>
    <dbReference type="NCBI Taxonomy" id="38833"/>
</organismHost>
<name>VP10_MPRVN</name>
<sequence>MNGLSLSATKVEGNLYATLDSFLGKAPRDMPTHVLRKFEDTVEVGSTTAFFVHQTTNGITSSDNAHTAIIMLADGTTSTLGEVSGNFSTDAGDVVIASAIAVASNSPQNAPPGVASATIIPEGSVNFNSGLTSSNVTQARINSVQQVTDSLGKNHGVFCRDIHVQRDDRHLAATKVIAVSGLTTDSRTQVVLSSYVLQRISATGTSVAFESGVHKDFVYNVLLTAYESHGCLATKA</sequence>
<dbReference type="EMBL" id="DQ126110">
    <property type="protein sequence ID" value="AAZ94050.1"/>
    <property type="molecule type" value="Genomic_RNA"/>
</dbReference>
<dbReference type="RefSeq" id="YP_654553.1">
    <property type="nucleotide sequence ID" value="NC_008180.1"/>
</dbReference>
<dbReference type="KEGG" id="vg:5076672"/>
<dbReference type="Proteomes" id="UP000000349">
    <property type="component" value="Genome"/>
</dbReference>
<organism>
    <name type="scientific">Micromonas pusilla reovirus (isolate Netherlands/2005)</name>
    <name type="common">MpRV</name>
    <dbReference type="NCBI Taxonomy" id="649596"/>
    <lineage>
        <taxon>Viruses</taxon>
        <taxon>Riboviria</taxon>
        <taxon>Orthornavirae</taxon>
        <taxon>Duplornaviricota</taxon>
        <taxon>Resentoviricetes</taxon>
        <taxon>Reovirales</taxon>
        <taxon>Sedoreoviridae</taxon>
        <taxon>Mimoreovirus</taxon>
        <taxon>Micromonas pusilla reovirus</taxon>
    </lineage>
</organism>
<keyword id="KW-1185">Reference proteome</keyword>
<protein>
    <recommendedName>
        <fullName>Uncharacterized protein VP10</fullName>
    </recommendedName>
</protein>
<proteinExistence type="predicted"/>
<reference key="1">
    <citation type="journal article" date="2006" name="J. Gen. Virol.">
        <title>Micromonas pusilla reovirus: a new member of the family Reoviridae assigned to a novel proposed genus (Mimoreovirus).</title>
        <authorList>
            <person name="Attoui H."/>
            <person name="Jaafar F.M."/>
            <person name="Belhouchet M."/>
            <person name="de Micco P."/>
            <person name="de Lamballerie X."/>
            <person name="Brussaard C.P."/>
        </authorList>
    </citation>
    <scope>NUCLEOTIDE SEQUENCE [GENOMIC RNA]</scope>
</reference>
<gene>
    <name type="primary">S10</name>
</gene>